<name>PBPA_RICFE</name>
<feature type="chain" id="PRO_0000286452" description="Penicillin-binding protein 1A">
    <location>
        <begin position="1"/>
        <end position="790"/>
    </location>
</feature>
<feature type="topological domain" description="Cytoplasmic" evidence="4">
    <location>
        <begin position="1"/>
        <end position="6"/>
    </location>
</feature>
<feature type="transmembrane region" description="Helical; Signal-anchor for type II membrane protein" evidence="4">
    <location>
        <begin position="7"/>
        <end position="27"/>
    </location>
</feature>
<feature type="topological domain" description="Periplasmic" evidence="4">
    <location>
        <begin position="28"/>
        <end position="790"/>
    </location>
</feature>
<feature type="region of interest" description="Transglycosylase">
    <location>
        <begin position="49"/>
        <end position="220"/>
    </location>
</feature>
<feature type="region of interest" description="Transpeptidase">
    <location>
        <begin position="398"/>
        <end position="711"/>
    </location>
</feature>
<feature type="active site" description="Proton donor; for transglycosylase activity" evidence="3">
    <location>
        <position position="87"/>
    </location>
</feature>
<feature type="active site" description="Acyl-ester intermediate; for transpeptidase activity" evidence="3">
    <location>
        <position position="457"/>
    </location>
</feature>
<protein>
    <recommendedName>
        <fullName>Penicillin-binding protein 1A</fullName>
        <shortName>PBP-1a</shortName>
        <shortName>PBP1a</shortName>
    </recommendedName>
    <domain>
        <recommendedName>
            <fullName>Penicillin-insensitive transglycosylase</fullName>
            <ecNumber evidence="2">2.4.99.28</ecNumber>
        </recommendedName>
        <alternativeName>
            <fullName>Peptidoglycan TGase</fullName>
        </alternativeName>
    </domain>
    <domain>
        <recommendedName>
            <fullName>Penicillin-sensitive transpeptidase</fullName>
            <ecNumber evidence="2">3.4.16.4</ecNumber>
        </recommendedName>
        <alternativeName>
            <fullName>DD-transpeptidase</fullName>
        </alternativeName>
    </domain>
</protein>
<sequence>MYKSLFFCLKIFAVLILVGCGITAYIIYHYSRDLPDYSQLARYYPPSVTRIYSHDGKLMEEYAFERRVFVPINSIPSSLIESFIAAEDKNFYNHPGVDLLGIVRAAFLNISNYLHHRRMEGASTITQQVVKNFLLTNEVSLERKIKEAILSYMISRVFTKEQILELYLNQTFFGRGAYGVAAAAQNYFNKSVEELTIAESAFIAALPKAPSELNPERNYARVKARRDYVIARMFEDGYITKDAAKEAMDSPIVLRKRAKEETVTADYYAAQVREEVIRMLNSKEEFYTGGLTIITSLDAKMQQLAENSLRKGLREFDRRRGFRKPIANIPLDNWQEEIKKLPSPPSLLEYKLAVVLDVADNHAEIGLIDGSKSKILIAEMKWARSNLKSVKTLLKKGDVIVVEPIKDGYALRQIPEVNGAIMVMNPNTGQVLASVGGYDFSTSKFDRVTQALRQPGSLSKTFVYLAALENGIKPNQIFNDGPIEISQGPGMPSWRPKNYEGKFLGEITMRTGLEKSCNLITVRVATAVGLTKIVDIIKRFGINNEPKKVYSMVLGSIETTLSRMTNAYAIIANGGKKVEPHFVELIKDRNGKIIYRRDNRECLSCNVSDSNLDIAILEIPKEDIYRVTDEASDYQITSFLTGAIDRSTGYAAKKLGKIIGGKTGTSNDSKDTWFVGFTPKIVVGSYVGYDTPKELGKRATGSNVVLPIFIDFMSNAYKDEPSLPFKVPDSIKLIAVDRATGKITPSGTVIEAFKVNNIQMLENEDMIDNRDNNDIFDYVPSKEDQSQEIY</sequence>
<keyword id="KW-0046">Antibiotic resistance</keyword>
<keyword id="KW-0121">Carboxypeptidase</keyword>
<keyword id="KW-0997">Cell inner membrane</keyword>
<keyword id="KW-1003">Cell membrane</keyword>
<keyword id="KW-0133">Cell shape</keyword>
<keyword id="KW-0961">Cell wall biogenesis/degradation</keyword>
<keyword id="KW-0328">Glycosyltransferase</keyword>
<keyword id="KW-0378">Hydrolase</keyword>
<keyword id="KW-0472">Membrane</keyword>
<keyword id="KW-0511">Multifunctional enzyme</keyword>
<keyword id="KW-0573">Peptidoglycan synthesis</keyword>
<keyword id="KW-0645">Protease</keyword>
<keyword id="KW-0735">Signal-anchor</keyword>
<keyword id="KW-0808">Transferase</keyword>
<keyword id="KW-0812">Transmembrane</keyword>
<keyword id="KW-1133">Transmembrane helix</keyword>
<evidence type="ECO:0000250" key="1"/>
<evidence type="ECO:0000250" key="2">
    <source>
        <dbReference type="UniProtKB" id="P02918"/>
    </source>
</evidence>
<evidence type="ECO:0000250" key="3">
    <source>
        <dbReference type="UniProtKB" id="P02919"/>
    </source>
</evidence>
<evidence type="ECO:0000255" key="4"/>
<evidence type="ECO:0000305" key="5"/>
<reference key="1">
    <citation type="journal article" date="2005" name="PLoS Biol.">
        <title>The genome sequence of Rickettsia felis identifies the first putative conjugative plasmid in an obligate intracellular parasite.</title>
        <authorList>
            <person name="Ogata H."/>
            <person name="Renesto P."/>
            <person name="Audic S."/>
            <person name="Robert C."/>
            <person name="Blanc G."/>
            <person name="Fournier P.-E."/>
            <person name="Parinello H."/>
            <person name="Claverie J.-M."/>
            <person name="Raoult D."/>
        </authorList>
    </citation>
    <scope>NUCLEOTIDE SEQUENCE [LARGE SCALE GENOMIC DNA]</scope>
    <source>
        <strain>ATCC VR-1525 / URRWXCal2</strain>
    </source>
</reference>
<proteinExistence type="inferred from homology"/>
<accession>Q4UK08</accession>
<dbReference type="EC" id="2.4.99.28" evidence="2"/>
<dbReference type="EC" id="3.4.16.4" evidence="2"/>
<dbReference type="EMBL" id="CP000053">
    <property type="protein sequence ID" value="AAY62127.1"/>
    <property type="molecule type" value="Genomic_DNA"/>
</dbReference>
<dbReference type="SMR" id="Q4UK08"/>
<dbReference type="STRING" id="315456.RF_1276"/>
<dbReference type="CAZy" id="GT51">
    <property type="family name" value="Glycosyltransferase Family 51"/>
</dbReference>
<dbReference type="KEGG" id="rfe:RF_1276"/>
<dbReference type="eggNOG" id="COG5009">
    <property type="taxonomic scope" value="Bacteria"/>
</dbReference>
<dbReference type="HOGENOM" id="CLU_006354_2_4_5"/>
<dbReference type="OrthoDB" id="9766909at2"/>
<dbReference type="UniPathway" id="UPA00219"/>
<dbReference type="Proteomes" id="UP000008548">
    <property type="component" value="Chromosome"/>
</dbReference>
<dbReference type="GO" id="GO:0030288">
    <property type="term" value="C:outer membrane-bounded periplasmic space"/>
    <property type="evidence" value="ECO:0007669"/>
    <property type="project" value="TreeGrafter"/>
</dbReference>
<dbReference type="GO" id="GO:0005886">
    <property type="term" value="C:plasma membrane"/>
    <property type="evidence" value="ECO:0007669"/>
    <property type="project" value="UniProtKB-SubCell"/>
</dbReference>
<dbReference type="GO" id="GO:0008658">
    <property type="term" value="F:penicillin binding"/>
    <property type="evidence" value="ECO:0007669"/>
    <property type="project" value="InterPro"/>
</dbReference>
<dbReference type="GO" id="GO:0008955">
    <property type="term" value="F:peptidoglycan glycosyltransferase activity"/>
    <property type="evidence" value="ECO:0007669"/>
    <property type="project" value="RHEA"/>
</dbReference>
<dbReference type="GO" id="GO:0009002">
    <property type="term" value="F:serine-type D-Ala-D-Ala carboxypeptidase activity"/>
    <property type="evidence" value="ECO:0007669"/>
    <property type="project" value="UniProtKB-EC"/>
</dbReference>
<dbReference type="GO" id="GO:0071555">
    <property type="term" value="P:cell wall organization"/>
    <property type="evidence" value="ECO:0007669"/>
    <property type="project" value="UniProtKB-KW"/>
</dbReference>
<dbReference type="GO" id="GO:0009252">
    <property type="term" value="P:peptidoglycan biosynthetic process"/>
    <property type="evidence" value="ECO:0007669"/>
    <property type="project" value="UniProtKB-UniPathway"/>
</dbReference>
<dbReference type="GO" id="GO:0006508">
    <property type="term" value="P:proteolysis"/>
    <property type="evidence" value="ECO:0007669"/>
    <property type="project" value="UniProtKB-KW"/>
</dbReference>
<dbReference type="GO" id="GO:0008360">
    <property type="term" value="P:regulation of cell shape"/>
    <property type="evidence" value="ECO:0007669"/>
    <property type="project" value="UniProtKB-KW"/>
</dbReference>
<dbReference type="GO" id="GO:0046677">
    <property type="term" value="P:response to antibiotic"/>
    <property type="evidence" value="ECO:0007669"/>
    <property type="project" value="UniProtKB-KW"/>
</dbReference>
<dbReference type="FunFam" id="1.10.3810.10:FF:000003">
    <property type="entry name" value="Penicillin-binding protein 1a"/>
    <property type="match status" value="1"/>
</dbReference>
<dbReference type="Gene3D" id="1.10.3810.10">
    <property type="entry name" value="Biosynthetic peptidoglycan transglycosylase-like"/>
    <property type="match status" value="1"/>
</dbReference>
<dbReference type="Gene3D" id="3.40.710.10">
    <property type="entry name" value="DD-peptidase/beta-lactamase superfamily"/>
    <property type="match status" value="2"/>
</dbReference>
<dbReference type="InterPro" id="IPR012338">
    <property type="entry name" value="Beta-lactam/transpept-like"/>
</dbReference>
<dbReference type="InterPro" id="IPR001264">
    <property type="entry name" value="Glyco_trans_51"/>
</dbReference>
<dbReference type="InterPro" id="IPR050396">
    <property type="entry name" value="Glycosyltr_51/Transpeptidase"/>
</dbReference>
<dbReference type="InterPro" id="IPR023346">
    <property type="entry name" value="Lysozyme-like_dom_sf"/>
</dbReference>
<dbReference type="InterPro" id="IPR036950">
    <property type="entry name" value="PBP_transglycosylase"/>
</dbReference>
<dbReference type="InterPro" id="IPR031376">
    <property type="entry name" value="PCB_OB"/>
</dbReference>
<dbReference type="InterPro" id="IPR001460">
    <property type="entry name" value="PCN-bd_Tpept"/>
</dbReference>
<dbReference type="NCBIfam" id="TIGR02074">
    <property type="entry name" value="PBP_1a_fam"/>
    <property type="match status" value="1"/>
</dbReference>
<dbReference type="PANTHER" id="PTHR32282">
    <property type="entry name" value="BINDING PROTEIN TRANSPEPTIDASE, PUTATIVE-RELATED"/>
    <property type="match status" value="1"/>
</dbReference>
<dbReference type="PANTHER" id="PTHR32282:SF27">
    <property type="entry name" value="PENICILLIN-BINDING PROTEIN 1A"/>
    <property type="match status" value="1"/>
</dbReference>
<dbReference type="Pfam" id="PF17092">
    <property type="entry name" value="PCB_OB"/>
    <property type="match status" value="1"/>
</dbReference>
<dbReference type="Pfam" id="PF00912">
    <property type="entry name" value="Transgly"/>
    <property type="match status" value="1"/>
</dbReference>
<dbReference type="Pfam" id="PF00905">
    <property type="entry name" value="Transpeptidase"/>
    <property type="match status" value="1"/>
</dbReference>
<dbReference type="SUPFAM" id="SSF56601">
    <property type="entry name" value="beta-lactamase/transpeptidase-like"/>
    <property type="match status" value="1"/>
</dbReference>
<dbReference type="SUPFAM" id="SSF53955">
    <property type="entry name" value="Lysozyme-like"/>
    <property type="match status" value="1"/>
</dbReference>
<comment type="function">
    <text evidence="1">Cell wall formation. Synthesis of cross-linked peptidoglycan from the lipid intermediates. The enzyme has a penicillin-insensitive transglycosylase N-terminal domain (formation of linear glycan strands) and a penicillin-sensitive transpeptidase C-terminal domain (cross-linking of the peptide subunits).</text>
</comment>
<comment type="catalytic activity">
    <reaction evidence="2">
        <text>[GlcNAc-(1-&gt;4)-Mur2Ac(oyl-L-Ala-gamma-D-Glu-L-Lys-D-Ala-D-Ala)](n)-di-trans,octa-cis-undecaprenyl diphosphate + beta-D-GlcNAc-(1-&gt;4)-Mur2Ac(oyl-L-Ala-gamma-D-Glu-L-Lys-D-Ala-D-Ala)-di-trans,octa-cis-undecaprenyl diphosphate = [GlcNAc-(1-&gt;4)-Mur2Ac(oyl-L-Ala-gamma-D-Glu-L-Lys-D-Ala-D-Ala)](n+1)-di-trans,octa-cis-undecaprenyl diphosphate + di-trans,octa-cis-undecaprenyl diphosphate + H(+)</text>
        <dbReference type="Rhea" id="RHEA:23708"/>
        <dbReference type="Rhea" id="RHEA-COMP:9602"/>
        <dbReference type="Rhea" id="RHEA-COMP:9603"/>
        <dbReference type="ChEBI" id="CHEBI:15378"/>
        <dbReference type="ChEBI" id="CHEBI:58405"/>
        <dbReference type="ChEBI" id="CHEBI:60033"/>
        <dbReference type="ChEBI" id="CHEBI:78435"/>
        <dbReference type="EC" id="2.4.99.28"/>
    </reaction>
</comment>
<comment type="catalytic activity">
    <reaction evidence="2">
        <text>Preferential cleavage: (Ac)2-L-Lys-D-Ala-|-D-Ala. Also transpeptidation of peptidyl-alanyl moieties that are N-acyl substituents of D-alanine.</text>
        <dbReference type="EC" id="3.4.16.4"/>
    </reaction>
</comment>
<comment type="pathway">
    <text>Cell wall biogenesis; peptidoglycan biosynthesis.</text>
</comment>
<comment type="subcellular location">
    <subcellularLocation>
        <location evidence="1">Cell inner membrane</location>
        <topology evidence="1">Single-pass type II membrane protein</topology>
    </subcellularLocation>
</comment>
<comment type="similarity">
    <text evidence="5">In the N-terminal section; belongs to the glycosyltransferase 51 family.</text>
</comment>
<comment type="similarity">
    <text evidence="5">In the C-terminal section; belongs to the transpeptidase family.</text>
</comment>
<organism>
    <name type="scientific">Rickettsia felis (strain ATCC VR-1525 / URRWXCal2)</name>
    <name type="common">Rickettsia azadi</name>
    <dbReference type="NCBI Taxonomy" id="315456"/>
    <lineage>
        <taxon>Bacteria</taxon>
        <taxon>Pseudomonadati</taxon>
        <taxon>Pseudomonadota</taxon>
        <taxon>Alphaproteobacteria</taxon>
        <taxon>Rickettsiales</taxon>
        <taxon>Rickettsiaceae</taxon>
        <taxon>Rickettsieae</taxon>
        <taxon>Rickettsia</taxon>
        <taxon>spotted fever group</taxon>
    </lineage>
</organism>
<gene>
    <name type="primary">mrcA</name>
    <name type="synonym">ponA</name>
    <name type="ordered locus">RF_1276</name>
</gene>